<dbReference type="EMBL" id="CP000868">
    <property type="protein sequence ID" value="ABX14445.1"/>
    <property type="molecule type" value="Genomic_DNA"/>
</dbReference>
<dbReference type="EMBL" id="AP009385">
    <property type="protein sequence ID" value="BAG44401.1"/>
    <property type="molecule type" value="Genomic_DNA"/>
</dbReference>
<dbReference type="RefSeq" id="WP_006398499.1">
    <property type="nucleotide sequence ID" value="NC_010804.1"/>
</dbReference>
<dbReference type="SMR" id="A9AGK3"/>
<dbReference type="STRING" id="395019.BMULJ_02510"/>
<dbReference type="KEGG" id="bmj:BMULJ_02510"/>
<dbReference type="KEGG" id="bmu:Bmul_0750"/>
<dbReference type="eggNOG" id="COG2835">
    <property type="taxonomic scope" value="Bacteria"/>
</dbReference>
<dbReference type="HOGENOM" id="CLU_155659_3_0_4"/>
<dbReference type="Proteomes" id="UP000008815">
    <property type="component" value="Chromosome 1"/>
</dbReference>
<dbReference type="GO" id="GO:0005829">
    <property type="term" value="C:cytosol"/>
    <property type="evidence" value="ECO:0007669"/>
    <property type="project" value="TreeGrafter"/>
</dbReference>
<dbReference type="FunFam" id="2.20.25.10:FF:000002">
    <property type="entry name" value="UPF0434 protein YcaR"/>
    <property type="match status" value="1"/>
</dbReference>
<dbReference type="Gene3D" id="2.20.25.10">
    <property type="match status" value="1"/>
</dbReference>
<dbReference type="HAMAP" id="MF_01187">
    <property type="entry name" value="UPF0434"/>
    <property type="match status" value="1"/>
</dbReference>
<dbReference type="InterPro" id="IPR005651">
    <property type="entry name" value="Trm112-like"/>
</dbReference>
<dbReference type="PANTHER" id="PTHR33505:SF4">
    <property type="entry name" value="PROTEIN PREY, MITOCHONDRIAL"/>
    <property type="match status" value="1"/>
</dbReference>
<dbReference type="PANTHER" id="PTHR33505">
    <property type="entry name" value="ZGC:162634"/>
    <property type="match status" value="1"/>
</dbReference>
<dbReference type="Pfam" id="PF03966">
    <property type="entry name" value="Trm112p"/>
    <property type="match status" value="1"/>
</dbReference>
<dbReference type="SUPFAM" id="SSF158997">
    <property type="entry name" value="Trm112p-like"/>
    <property type="match status" value="1"/>
</dbReference>
<gene>
    <name type="ordered locus">Bmul_0750</name>
    <name type="ordered locus">BMULJ_02510</name>
</gene>
<sequence>MDARLLEILVCPICKGPLHYDRAAQELICNADKLAYPVRDGIPVMLVDEARQTVEGTPVDPSGR</sequence>
<comment type="similarity">
    <text evidence="1">Belongs to the UPF0434 family.</text>
</comment>
<evidence type="ECO:0000255" key="1">
    <source>
        <dbReference type="HAMAP-Rule" id="MF_01187"/>
    </source>
</evidence>
<proteinExistence type="inferred from homology"/>
<reference key="1">
    <citation type="submission" date="2007-10" db="EMBL/GenBank/DDBJ databases">
        <title>Complete sequence of chromosome 1 of Burkholderia multivorans ATCC 17616.</title>
        <authorList>
            <person name="Copeland A."/>
            <person name="Lucas S."/>
            <person name="Lapidus A."/>
            <person name="Barry K."/>
            <person name="Glavina del Rio T."/>
            <person name="Dalin E."/>
            <person name="Tice H."/>
            <person name="Pitluck S."/>
            <person name="Chain P."/>
            <person name="Malfatti S."/>
            <person name="Shin M."/>
            <person name="Vergez L."/>
            <person name="Schmutz J."/>
            <person name="Larimer F."/>
            <person name="Land M."/>
            <person name="Hauser L."/>
            <person name="Kyrpides N."/>
            <person name="Kim E."/>
            <person name="Tiedje J."/>
            <person name="Richardson P."/>
        </authorList>
    </citation>
    <scope>NUCLEOTIDE SEQUENCE [LARGE SCALE GENOMIC DNA]</scope>
    <source>
        <strain>ATCC 17616 / 249</strain>
    </source>
</reference>
<reference key="2">
    <citation type="submission" date="2007-04" db="EMBL/GenBank/DDBJ databases">
        <title>Complete genome sequence of Burkholderia multivorans ATCC 17616.</title>
        <authorList>
            <person name="Ohtsubo Y."/>
            <person name="Yamashita A."/>
            <person name="Kurokawa K."/>
            <person name="Takami H."/>
            <person name="Yuhara S."/>
            <person name="Nishiyama E."/>
            <person name="Endo R."/>
            <person name="Miyazaki R."/>
            <person name="Ono A."/>
            <person name="Yano K."/>
            <person name="Ito M."/>
            <person name="Sota M."/>
            <person name="Yuji N."/>
            <person name="Hattori M."/>
            <person name="Tsuda M."/>
        </authorList>
    </citation>
    <scope>NUCLEOTIDE SEQUENCE [LARGE SCALE GENOMIC DNA]</scope>
    <source>
        <strain>ATCC 17616 / 249</strain>
    </source>
</reference>
<protein>
    <recommendedName>
        <fullName evidence="1">UPF0434 protein Bmul_0750/BMULJ_02510</fullName>
    </recommendedName>
</protein>
<name>Y2510_BURM1</name>
<feature type="chain" id="PRO_1000138294" description="UPF0434 protein Bmul_0750/BMULJ_02510">
    <location>
        <begin position="1"/>
        <end position="64"/>
    </location>
</feature>
<keyword id="KW-1185">Reference proteome</keyword>
<accession>A9AGK3</accession>
<organism>
    <name type="scientific">Burkholderia multivorans (strain ATCC 17616 / 249)</name>
    <dbReference type="NCBI Taxonomy" id="395019"/>
    <lineage>
        <taxon>Bacteria</taxon>
        <taxon>Pseudomonadati</taxon>
        <taxon>Pseudomonadota</taxon>
        <taxon>Betaproteobacteria</taxon>
        <taxon>Burkholderiales</taxon>
        <taxon>Burkholderiaceae</taxon>
        <taxon>Burkholderia</taxon>
        <taxon>Burkholderia cepacia complex</taxon>
    </lineage>
</organism>